<protein>
    <recommendedName>
        <fullName>Glutathione reductase, chloroplastic/mitochondrial</fullName>
        <shortName>GR</shortName>
        <shortName>GRase</shortName>
        <ecNumber>1.8.1.7</ecNumber>
    </recommendedName>
    <alternativeName>
        <fullName>GOR1</fullName>
    </alternativeName>
</protein>
<organism>
    <name type="scientific">Pisum sativum</name>
    <name type="common">Garden pea</name>
    <name type="synonym">Lathyrus oleraceus</name>
    <dbReference type="NCBI Taxonomy" id="3888"/>
    <lineage>
        <taxon>Eukaryota</taxon>
        <taxon>Viridiplantae</taxon>
        <taxon>Streptophyta</taxon>
        <taxon>Embryophyta</taxon>
        <taxon>Tracheophyta</taxon>
        <taxon>Spermatophyta</taxon>
        <taxon>Magnoliopsida</taxon>
        <taxon>eudicotyledons</taxon>
        <taxon>Gunneridae</taxon>
        <taxon>Pentapetalae</taxon>
        <taxon>rosids</taxon>
        <taxon>fabids</taxon>
        <taxon>Fabales</taxon>
        <taxon>Fabaceae</taxon>
        <taxon>Papilionoideae</taxon>
        <taxon>50 kb inversion clade</taxon>
        <taxon>NPAAA clade</taxon>
        <taxon>Hologalegina</taxon>
        <taxon>IRL clade</taxon>
        <taxon>Fabeae</taxon>
        <taxon>Pisum</taxon>
    </lineage>
</organism>
<accession>P27456</accession>
<proteinExistence type="evidence at transcript level"/>
<reference key="1">
    <citation type="journal article" date="1992" name="Plant J.">
        <title>Molecular characterization of glutathione reductase cDNAs from pea (Pisum sativum L.).</title>
        <authorList>
            <person name="Creissen G."/>
            <person name="Edwards E.A."/>
            <person name="Enard C."/>
            <person name="Wellburn A."/>
            <person name="Mullineaux P.M."/>
        </authorList>
    </citation>
    <scope>NUCLEOTIDE SEQUENCE [MRNA]</scope>
    <source>
        <tissue>Leaf</tissue>
    </source>
</reference>
<reference key="2">
    <citation type="journal article" date="1996" name="Planta">
        <title>Characterisation of a glutathione reductase gene and its genetic locus from pea (Pisum sativum L.).</title>
        <authorList>
            <person name="Mullineaux P.M."/>
            <person name="Enard C."/>
            <person name="Hellens R."/>
            <person name="Creissen G."/>
        </authorList>
    </citation>
    <scope>NUCLEOTIDE SEQUENCE [GENOMIC DNA]</scope>
    <source>
        <strain>cv. Birte</strain>
    </source>
</reference>
<reference key="3">
    <citation type="journal article" date="1995" name="Plant J.">
        <title>Simultaneous targeting of pea glutathione reductase and of a bacterial fusion protein to chloroplasts and mitochondria in transgenic tobacco.</title>
        <authorList>
            <person name="Creissen G.P."/>
            <person name="Reynolds H."/>
            <person name="Xue Y."/>
            <person name="Mullineaux P.M."/>
        </authorList>
    </citation>
    <scope>SUBCELLULAR LOCATION</scope>
</reference>
<gene>
    <name type="primary">GR</name>
    <name type="synonym">GOR1</name>
</gene>
<name>GSHRP_PEA</name>
<comment type="function">
    <text evidence="2 6">Catalyzes the reduction of glutathione disulfide (GSSG) to reduced glutathione (GSH) (By similarity). Maintains high levels of GSH in the chloroplast (Probable).</text>
</comment>
<comment type="catalytic activity">
    <reaction evidence="2">
        <text>2 glutathione + NADP(+) = glutathione disulfide + NADPH + H(+)</text>
        <dbReference type="Rhea" id="RHEA:11740"/>
        <dbReference type="ChEBI" id="CHEBI:15378"/>
        <dbReference type="ChEBI" id="CHEBI:57783"/>
        <dbReference type="ChEBI" id="CHEBI:57925"/>
        <dbReference type="ChEBI" id="CHEBI:58297"/>
        <dbReference type="ChEBI" id="CHEBI:58349"/>
        <dbReference type="EC" id="1.8.1.7"/>
    </reaction>
</comment>
<comment type="cofactor">
    <cofactor evidence="2">
        <name>FAD</name>
        <dbReference type="ChEBI" id="CHEBI:57692"/>
    </cofactor>
    <text evidence="2">Binds 1 FAD per subunit.</text>
</comment>
<comment type="subunit">
    <text evidence="2">Homodimer.</text>
</comment>
<comment type="subcellular location">
    <subcellularLocation>
        <location evidence="5">Plastid</location>
        <location evidence="5">Chloroplast</location>
    </subcellularLocation>
    <subcellularLocation>
        <location evidence="5">Mitochondrion</location>
    </subcellularLocation>
    <text>The majority of the protein is found in chloroplast, with only 3% in mitochondria.</text>
</comment>
<comment type="miscellaneous">
    <text evidence="2">The active site is a redox-active disulfide bond.</text>
</comment>
<comment type="similarity">
    <text evidence="6">Belongs to the class-I pyridine nucleotide-disulfide oxidoreductase family.</text>
</comment>
<comment type="sequence caution" evidence="6">
    <conflict type="erroneous initiation">
        <sequence resource="EMBL-CDS" id="CAA42921"/>
    </conflict>
</comment>
<keyword id="KW-0150">Chloroplast</keyword>
<keyword id="KW-1015">Disulfide bond</keyword>
<keyword id="KW-0274">FAD</keyword>
<keyword id="KW-0285">Flavoprotein</keyword>
<keyword id="KW-0496">Mitochondrion</keyword>
<keyword id="KW-0521">NADP</keyword>
<keyword id="KW-0560">Oxidoreductase</keyword>
<keyword id="KW-0934">Plastid</keyword>
<keyword id="KW-0676">Redox-active center</keyword>
<keyword id="KW-0809">Transit peptide</keyword>
<evidence type="ECO:0000250" key="1">
    <source>
        <dbReference type="UniProtKB" id="P00390"/>
    </source>
</evidence>
<evidence type="ECO:0000250" key="2">
    <source>
        <dbReference type="UniProtKB" id="P06715"/>
    </source>
</evidence>
<evidence type="ECO:0000255" key="3"/>
<evidence type="ECO:0000256" key="4">
    <source>
        <dbReference type="SAM" id="MobiDB-lite"/>
    </source>
</evidence>
<evidence type="ECO:0000269" key="5">
    <source>
    </source>
</evidence>
<evidence type="ECO:0000305" key="6"/>
<feature type="transit peptide" description="Chloroplast and mitochondrion" evidence="3">
    <location>
        <begin position="1"/>
        <end position="60"/>
    </location>
</feature>
<feature type="chain" id="PRO_0000030281" description="Glutathione reductase, chloroplastic/mitochondrial">
    <location>
        <begin position="61"/>
        <end position="552"/>
    </location>
</feature>
<feature type="region of interest" description="Disordered" evidence="4">
    <location>
        <begin position="527"/>
        <end position="552"/>
    </location>
</feature>
<feature type="active site" description="Proton acceptor" evidence="1">
    <location>
        <position position="515"/>
    </location>
</feature>
<feature type="binding site" evidence="2">
    <location>
        <position position="83"/>
    </location>
    <ligand>
        <name>FAD</name>
        <dbReference type="ChEBI" id="CHEBI:57692"/>
    </ligand>
</feature>
<feature type="binding site" evidence="1">
    <location>
        <position position="83"/>
    </location>
    <ligand>
        <name>glutathione</name>
        <dbReference type="ChEBI" id="CHEBI:57925"/>
    </ligand>
</feature>
<feature type="binding site" evidence="2">
    <location>
        <position position="84"/>
    </location>
    <ligand>
        <name>FAD</name>
        <dbReference type="ChEBI" id="CHEBI:57692"/>
    </ligand>
</feature>
<feature type="binding site" evidence="2">
    <location>
        <position position="103"/>
    </location>
    <ligand>
        <name>FAD</name>
        <dbReference type="ChEBI" id="CHEBI:57692"/>
    </ligand>
</feature>
<feature type="binding site" evidence="2">
    <location>
        <position position="120"/>
    </location>
    <ligand>
        <name>FAD</name>
        <dbReference type="ChEBI" id="CHEBI:57692"/>
    </ligand>
</feature>
<feature type="binding site" evidence="2">
    <location>
        <position position="121"/>
    </location>
    <ligand>
        <name>FAD</name>
        <dbReference type="ChEBI" id="CHEBI:57692"/>
    </ligand>
</feature>
<feature type="binding site" evidence="2">
    <location>
        <position position="129"/>
    </location>
    <ligand>
        <name>FAD</name>
        <dbReference type="ChEBI" id="CHEBI:57692"/>
    </ligand>
</feature>
<feature type="binding site" evidence="1">
    <location>
        <position position="178"/>
    </location>
    <ligand>
        <name>glutathione</name>
        <dbReference type="ChEBI" id="CHEBI:57925"/>
    </ligand>
</feature>
<feature type="binding site" evidence="2">
    <location>
        <position position="194"/>
    </location>
    <ligand>
        <name>FAD</name>
        <dbReference type="ChEBI" id="CHEBI:57692"/>
    </ligand>
</feature>
<feature type="binding site" evidence="2">
    <location>
        <position position="254"/>
    </location>
    <ligand>
        <name>NADP(+)</name>
        <dbReference type="ChEBI" id="CHEBI:58349"/>
    </ligand>
</feature>
<feature type="binding site" evidence="2">
    <location>
        <position position="257"/>
    </location>
    <ligand>
        <name>NADP(+)</name>
        <dbReference type="ChEBI" id="CHEBI:58349"/>
    </ligand>
</feature>
<feature type="binding site" evidence="2">
    <location>
        <position position="260"/>
    </location>
    <ligand>
        <name>NADP(+)</name>
        <dbReference type="ChEBI" id="CHEBI:58349"/>
    </ligand>
</feature>
<feature type="binding site" evidence="2">
    <location>
        <position position="277"/>
    </location>
    <ligand>
        <name>NADP(+)</name>
        <dbReference type="ChEBI" id="CHEBI:58349"/>
    </ligand>
</feature>
<feature type="binding site" evidence="2">
    <location>
        <position position="283"/>
    </location>
    <ligand>
        <name>NADP(+)</name>
        <dbReference type="ChEBI" id="CHEBI:58349"/>
    </ligand>
</feature>
<feature type="binding site" evidence="2">
    <location>
        <position position="341"/>
    </location>
    <ligand>
        <name>NADP(+)</name>
        <dbReference type="ChEBI" id="CHEBI:58349"/>
    </ligand>
</feature>
<feature type="binding site" evidence="2">
    <location>
        <position position="382"/>
    </location>
    <ligand>
        <name>FAD</name>
        <dbReference type="ChEBI" id="CHEBI:57692"/>
    </ligand>
</feature>
<feature type="binding site" evidence="2">
    <location>
        <position position="390"/>
    </location>
    <ligand>
        <name>FAD</name>
        <dbReference type="ChEBI" id="CHEBI:57692"/>
    </ligand>
</feature>
<feature type="binding site" evidence="2">
    <location>
        <position position="420"/>
    </location>
    <ligand>
        <name>NADP(+)</name>
        <dbReference type="ChEBI" id="CHEBI:58349"/>
    </ligand>
</feature>
<feature type="binding site" evidence="2">
    <location>
        <position position="515"/>
    </location>
    <ligand>
        <name>FAD</name>
        <dbReference type="ChEBI" id="CHEBI:57692"/>
    </ligand>
</feature>
<feature type="disulfide bond" description="Redox-active" evidence="2">
    <location>
        <begin position="121"/>
        <end position="126"/>
    </location>
</feature>
<dbReference type="EC" id="1.8.1.7"/>
<dbReference type="EMBL" id="X60373">
    <property type="protein sequence ID" value="CAA42921.1"/>
    <property type="status" value="ALT_INIT"/>
    <property type="molecule type" value="mRNA"/>
</dbReference>
<dbReference type="EMBL" id="X90996">
    <property type="protein sequence ID" value="CAA62482.1"/>
    <property type="molecule type" value="Genomic_DNA"/>
</dbReference>
<dbReference type="PIR" id="S18973">
    <property type="entry name" value="S18973"/>
</dbReference>
<dbReference type="SMR" id="P27456"/>
<dbReference type="EnsemblPlants" id="Psat6g057720.1">
    <property type="protein sequence ID" value="Psat6g057720.1.cds"/>
    <property type="gene ID" value="Psat6g057720"/>
</dbReference>
<dbReference type="Gramene" id="Psat6g057720.1">
    <property type="protein sequence ID" value="Psat6g057720.1.cds"/>
    <property type="gene ID" value="Psat6g057720"/>
</dbReference>
<dbReference type="OrthoDB" id="5956163at2759"/>
<dbReference type="GO" id="GO:0009507">
    <property type="term" value="C:chloroplast"/>
    <property type="evidence" value="ECO:0007669"/>
    <property type="project" value="UniProtKB-SubCell"/>
</dbReference>
<dbReference type="GO" id="GO:0005829">
    <property type="term" value="C:cytosol"/>
    <property type="evidence" value="ECO:0007669"/>
    <property type="project" value="TreeGrafter"/>
</dbReference>
<dbReference type="GO" id="GO:0005739">
    <property type="term" value="C:mitochondrion"/>
    <property type="evidence" value="ECO:0007669"/>
    <property type="project" value="UniProtKB-SubCell"/>
</dbReference>
<dbReference type="GO" id="GO:0050660">
    <property type="term" value="F:flavin adenine dinucleotide binding"/>
    <property type="evidence" value="ECO:0007669"/>
    <property type="project" value="InterPro"/>
</dbReference>
<dbReference type="GO" id="GO:0004362">
    <property type="term" value="F:glutathione-disulfide reductase (NADPH) activity"/>
    <property type="evidence" value="ECO:0007669"/>
    <property type="project" value="UniProtKB-EC"/>
</dbReference>
<dbReference type="GO" id="GO:0050661">
    <property type="term" value="F:NADP binding"/>
    <property type="evidence" value="ECO:0007669"/>
    <property type="project" value="InterPro"/>
</dbReference>
<dbReference type="GO" id="GO:0045454">
    <property type="term" value="P:cell redox homeostasis"/>
    <property type="evidence" value="ECO:0007669"/>
    <property type="project" value="InterPro"/>
</dbReference>
<dbReference type="GO" id="GO:0034599">
    <property type="term" value="P:cellular response to oxidative stress"/>
    <property type="evidence" value="ECO:0007669"/>
    <property type="project" value="TreeGrafter"/>
</dbReference>
<dbReference type="GO" id="GO:0006749">
    <property type="term" value="P:glutathione metabolic process"/>
    <property type="evidence" value="ECO:0007669"/>
    <property type="project" value="InterPro"/>
</dbReference>
<dbReference type="FunFam" id="3.50.50.60:FF:000051">
    <property type="entry name" value="Glutathione reductase"/>
    <property type="match status" value="1"/>
</dbReference>
<dbReference type="Gene3D" id="3.30.390.30">
    <property type="match status" value="1"/>
</dbReference>
<dbReference type="Gene3D" id="3.50.50.60">
    <property type="entry name" value="FAD/NAD(P)-binding domain"/>
    <property type="match status" value="2"/>
</dbReference>
<dbReference type="InterPro" id="IPR036188">
    <property type="entry name" value="FAD/NAD-bd_sf"/>
</dbReference>
<dbReference type="InterPro" id="IPR023753">
    <property type="entry name" value="FAD/NAD-binding_dom"/>
</dbReference>
<dbReference type="InterPro" id="IPR016156">
    <property type="entry name" value="FAD/NAD-linked_Rdtase_dimer_sf"/>
</dbReference>
<dbReference type="InterPro" id="IPR006324">
    <property type="entry name" value="GSHR"/>
</dbReference>
<dbReference type="InterPro" id="IPR046952">
    <property type="entry name" value="GSHR/TRXR-like"/>
</dbReference>
<dbReference type="InterPro" id="IPR001100">
    <property type="entry name" value="Pyr_nuc-diS_OxRdtase"/>
</dbReference>
<dbReference type="InterPro" id="IPR004099">
    <property type="entry name" value="Pyr_nucl-diS_OxRdtase_dimer"/>
</dbReference>
<dbReference type="InterPro" id="IPR012999">
    <property type="entry name" value="Pyr_OxRdtase_I_AS"/>
</dbReference>
<dbReference type="NCBIfam" id="TIGR01424">
    <property type="entry name" value="gluta_reduc_2"/>
    <property type="match status" value="1"/>
</dbReference>
<dbReference type="NCBIfam" id="NF004776">
    <property type="entry name" value="PRK06116.1"/>
    <property type="match status" value="1"/>
</dbReference>
<dbReference type="PANTHER" id="PTHR42737">
    <property type="entry name" value="GLUTATHIONE REDUCTASE"/>
    <property type="match status" value="1"/>
</dbReference>
<dbReference type="PANTHER" id="PTHR42737:SF9">
    <property type="entry name" value="GLUTATHIONE REDUCTASE"/>
    <property type="match status" value="1"/>
</dbReference>
<dbReference type="Pfam" id="PF07992">
    <property type="entry name" value="Pyr_redox_2"/>
    <property type="match status" value="1"/>
</dbReference>
<dbReference type="Pfam" id="PF02852">
    <property type="entry name" value="Pyr_redox_dim"/>
    <property type="match status" value="1"/>
</dbReference>
<dbReference type="PIRSF" id="PIRSF000350">
    <property type="entry name" value="Mercury_reductase_MerA"/>
    <property type="match status" value="1"/>
</dbReference>
<dbReference type="PRINTS" id="PR00368">
    <property type="entry name" value="FADPNR"/>
</dbReference>
<dbReference type="PRINTS" id="PR00411">
    <property type="entry name" value="PNDRDTASEI"/>
</dbReference>
<dbReference type="SUPFAM" id="SSF51905">
    <property type="entry name" value="FAD/NAD(P)-binding domain"/>
    <property type="match status" value="1"/>
</dbReference>
<dbReference type="SUPFAM" id="SSF55424">
    <property type="entry name" value="FAD/NAD-linked reductases, dimerisation (C-terminal) domain"/>
    <property type="match status" value="1"/>
</dbReference>
<dbReference type="PROSITE" id="PS00076">
    <property type="entry name" value="PYRIDINE_REDOX_1"/>
    <property type="match status" value="1"/>
</dbReference>
<sequence length="552" mass="59108">MNQAMATPLSLSCCSPTLTRSTLFFTKTFPFSRSFSTPLPLSTKTLISLSPPHRTFAVRAESQNGADPARQYDFDLFTIGAGSGGVRASRFASNFGASSAVCELPFSTISSDTTGGVGGTCVIRGCVPKKLLVYASKFSHEFEESNGFGWRYDSEPKHDWSSLIANKNAELQRLTGIYKNTLKNAGVKLIEGRGKIVDAHTVDVDGKLYSAKHILVSVGGRPFIPDIPGKEYAIDSDAALDLPSKPQKIAIVGGGYIALEFAGIFNGLKSEVHVFIRQKKVLRGFDEEIRDFVAENMALRGIEFHTEESPVAITKAADGSLSLKTNKGTEEGFSHIMFATGRSPNTKDLGLESVGVKVAKDGSIEVDEYSQTSVPSIWAIGDATNRVNLTPVALMEGVALAKTLFQNEPTKPDYRAIPSAVFSQPPIGGVGLTEEQAAEQYGDIDVFTANFRPMKATLSGLPDRVFMKLIVSAETNVVLGLHMCGEDAAEIAQGFAVGIKAGLTKADFDATVGIHPTAAEEFVTMRTPTRKVRKNQASQGKSDSKAKAVAGS</sequence>